<accession>Q8S4P6</accession>
<dbReference type="EC" id="2.1.1.356"/>
<dbReference type="EMBL" id="AF443596">
    <property type="protein sequence ID" value="AAM13420.1"/>
    <property type="molecule type" value="mRNA"/>
</dbReference>
<dbReference type="RefSeq" id="NP_001105078.1">
    <property type="nucleotide sequence ID" value="NM_001111608.1"/>
</dbReference>
<dbReference type="SMR" id="Q8S4P6"/>
<dbReference type="FunCoup" id="Q8S4P6">
    <property type="interactions" value="1261"/>
</dbReference>
<dbReference type="STRING" id="4577.Q8S4P6"/>
<dbReference type="PaxDb" id="4577-GRMZM2G157820_P02"/>
<dbReference type="EnsemblPlants" id="Zm00001eb271490_T005">
    <property type="protein sequence ID" value="Zm00001eb271490_P005"/>
    <property type="gene ID" value="Zm00001eb271490"/>
</dbReference>
<dbReference type="GeneID" id="541954"/>
<dbReference type="Gramene" id="Zm00001eb271490_T005">
    <property type="protein sequence ID" value="Zm00001eb271490_P005"/>
    <property type="gene ID" value="Zm00001eb271490"/>
</dbReference>
<dbReference type="KEGG" id="zma:541954"/>
<dbReference type="MaizeGDB" id="754841"/>
<dbReference type="eggNOG" id="KOG1079">
    <property type="taxonomic scope" value="Eukaryota"/>
</dbReference>
<dbReference type="HOGENOM" id="CLU_011060_0_0_1"/>
<dbReference type="InParanoid" id="Q8S4P6"/>
<dbReference type="OrthoDB" id="6141102at2759"/>
<dbReference type="Proteomes" id="UP000007305">
    <property type="component" value="Chromosome 6"/>
</dbReference>
<dbReference type="ExpressionAtlas" id="Q8S4P6">
    <property type="expression patterns" value="baseline and differential"/>
</dbReference>
<dbReference type="GO" id="GO:0005677">
    <property type="term" value="C:chromatin silencing complex"/>
    <property type="evidence" value="ECO:0007669"/>
    <property type="project" value="EnsemblPlants"/>
</dbReference>
<dbReference type="GO" id="GO:0005634">
    <property type="term" value="C:nucleus"/>
    <property type="evidence" value="ECO:0000318"/>
    <property type="project" value="GO_Central"/>
</dbReference>
<dbReference type="GO" id="GO:0031519">
    <property type="term" value="C:PcG protein complex"/>
    <property type="evidence" value="ECO:0007669"/>
    <property type="project" value="EnsemblPlants"/>
</dbReference>
<dbReference type="GO" id="GO:0003682">
    <property type="term" value="F:chromatin binding"/>
    <property type="evidence" value="ECO:0000318"/>
    <property type="project" value="GO_Central"/>
</dbReference>
<dbReference type="GO" id="GO:0046976">
    <property type="term" value="F:histone H3K27 methyltransferase activity"/>
    <property type="evidence" value="ECO:0000318"/>
    <property type="project" value="GO_Central"/>
</dbReference>
<dbReference type="GO" id="GO:0140951">
    <property type="term" value="F:histone H3K27 trimethyltransferase activity"/>
    <property type="evidence" value="ECO:0007669"/>
    <property type="project" value="UniProtKB-EC"/>
</dbReference>
<dbReference type="GO" id="GO:0031507">
    <property type="term" value="P:heterochromatin formation"/>
    <property type="evidence" value="ECO:0000318"/>
    <property type="project" value="GO_Central"/>
</dbReference>
<dbReference type="GO" id="GO:0032259">
    <property type="term" value="P:methylation"/>
    <property type="evidence" value="ECO:0007669"/>
    <property type="project" value="UniProtKB-KW"/>
</dbReference>
<dbReference type="GO" id="GO:0048586">
    <property type="term" value="P:regulation of long-day photoperiodism, flowering"/>
    <property type="evidence" value="ECO:0007669"/>
    <property type="project" value="EnsemblPlants"/>
</dbReference>
<dbReference type="CDD" id="cd10519">
    <property type="entry name" value="SET_EZH"/>
    <property type="match status" value="1"/>
</dbReference>
<dbReference type="FunFam" id="2.170.270.10:FF:000001">
    <property type="entry name" value="Putative histone-lysine N-methyltransferase EZH2"/>
    <property type="match status" value="1"/>
</dbReference>
<dbReference type="Gene3D" id="2.170.270.10">
    <property type="entry name" value="SET domain"/>
    <property type="match status" value="1"/>
</dbReference>
<dbReference type="InterPro" id="IPR026489">
    <property type="entry name" value="CXC_dom"/>
</dbReference>
<dbReference type="InterPro" id="IPR045318">
    <property type="entry name" value="EZH1/2-like"/>
</dbReference>
<dbReference type="InterPro" id="IPR025778">
    <property type="entry name" value="Hist-Lys_N-MeTrfase_plant"/>
</dbReference>
<dbReference type="InterPro" id="IPR041355">
    <property type="entry name" value="Pre-SET_CXC"/>
</dbReference>
<dbReference type="InterPro" id="IPR001214">
    <property type="entry name" value="SET_dom"/>
</dbReference>
<dbReference type="InterPro" id="IPR046341">
    <property type="entry name" value="SET_dom_sf"/>
</dbReference>
<dbReference type="InterPro" id="IPR033467">
    <property type="entry name" value="Tesmin/TSO1-like_CXC"/>
</dbReference>
<dbReference type="PANTHER" id="PTHR45747">
    <property type="entry name" value="HISTONE-LYSINE N-METHYLTRANSFERASE E(Z)"/>
    <property type="match status" value="1"/>
</dbReference>
<dbReference type="PANTHER" id="PTHR45747:SF4">
    <property type="entry name" value="HISTONE-LYSINE N-METHYLTRANSFERASE E(Z)"/>
    <property type="match status" value="1"/>
</dbReference>
<dbReference type="Pfam" id="PF18264">
    <property type="entry name" value="preSET_CXC"/>
    <property type="match status" value="1"/>
</dbReference>
<dbReference type="Pfam" id="PF00856">
    <property type="entry name" value="SET"/>
    <property type="match status" value="1"/>
</dbReference>
<dbReference type="SMART" id="SM01114">
    <property type="entry name" value="CXC"/>
    <property type="match status" value="1"/>
</dbReference>
<dbReference type="SMART" id="SM00317">
    <property type="entry name" value="SET"/>
    <property type="match status" value="1"/>
</dbReference>
<dbReference type="SUPFAM" id="SSF82199">
    <property type="entry name" value="SET domain"/>
    <property type="match status" value="1"/>
</dbReference>
<dbReference type="PROSITE" id="PS51633">
    <property type="entry name" value="CXC"/>
    <property type="match status" value="1"/>
</dbReference>
<dbReference type="PROSITE" id="PS51576">
    <property type="entry name" value="SAM_MT43_EZ"/>
    <property type="match status" value="1"/>
</dbReference>
<dbReference type="PROSITE" id="PS50280">
    <property type="entry name" value="SET"/>
    <property type="match status" value="1"/>
</dbReference>
<keyword id="KW-0489">Methyltransferase</keyword>
<keyword id="KW-0539">Nucleus</keyword>
<keyword id="KW-1185">Reference proteome</keyword>
<keyword id="KW-0678">Repressor</keyword>
<keyword id="KW-0949">S-adenosyl-L-methionine</keyword>
<keyword id="KW-0804">Transcription</keyword>
<keyword id="KW-0805">Transcription regulation</keyword>
<keyword id="KW-0808">Transferase</keyword>
<sequence length="931" mass="103769">MEAEAAAAVVASSASASASAGRSRPSSSAAQVTSNSAVRAGEENAASLYVLSVIDSLKKRITADRLTYIKNRIGENKTNISSYTQRTYNLSKNRQISTSKGTDSASNLLTKRQDDALCTLHSLDIIPVDKDGGTFQDESPFSSSNVMFGGNLGPKNAIIRPIKLPEVPKLPPYTTWIFLDRNQRMTEDQSVLGRRRIYYDTSCGEALICSDSEDEAIEDEEEKKEFKHSEDHIIRMTVQECGMSDAVLQTLARHMERAADDIKARYEILHGEKTKDSCKKGTEHNVKVEDLYCDKDLDAALDSFDNLFCRRCLVFDCKLHGCSQDLVFPTEKQPAWSGVDDSVPCGIHCHKLASEPDAAAGADHMLFDVEEPTHSSDNVMNQPGSNRKKNGSSGRKTKSQQSESSSTARVISESSDSEVHPISNKSPQHSPSPSKVKIGPKGGIRKITNRRIAERILMSVKKGQREMASSDSNFVSGYLLARDMKLRSDTRNGNKELIVSSQQSSPSTRSSKKKSTPQIGNSSAFAEAHNDSTEEANNRHSATDGYDSSRKEEFVNENLCKQEVYLRSWKAIEQGLLVKGLEIFGRNSCLIARNLLGGMKTCKDVFQYMNYIENNSASGALSGVDSLVKGYIKGTELRTRSRYFRRRGKVRRLKYTWKSAGYNFKRITERKDQPCRQYNPCGCQSTCGKQCPCLSNGTCCEKYCGCPKICKNRFRGCHCAKSQCRSRQCPCFAADRECDPDVCRNCWVGCGDGTLGVPNQRGDNYECRNMKLLLKQQQRVLLGRSDVSGWGAFLKNSVSKHEYLGEYTGELISHKEADKRGKIYDRENSSFLFNLNNEYVLDAYRMGDKLKFANHAPDPNCYAKVIMVTGDHRVGIFAKERILAGEELFYDYRYEPDRAPAWARKPEASGAKDDGQPFNGRAKKLAQNNRG</sequence>
<protein>
    <recommendedName>
        <fullName>Histone-lysine N-methyltransferase EZ1</fullName>
        <ecNumber>2.1.1.356</ecNumber>
    </recommendedName>
    <alternativeName>
        <fullName>Enhancer of zeste protein 1</fullName>
    </alternativeName>
</protein>
<name>EZ1_MAIZE</name>
<proteinExistence type="evidence at transcript level"/>
<comment type="function">
    <text evidence="1">Polycomb group (PcG) protein. Catalytic subunit of some PcG multiprotein complex, which methylates 'Lys-27' of histone H3, leading to transcriptional repression of the affected target genes. PcG proteins are not required to initiate repression, but to maintain it during later stages of development (By similarity).</text>
</comment>
<comment type="catalytic activity">
    <reaction evidence="3">
        <text>L-lysyl(27)-[histone H3] + 3 S-adenosyl-L-methionine = N(6),N(6),N(6)-trimethyl-L-lysyl(27)-[histone H3] + 3 S-adenosyl-L-homocysteine + 3 H(+)</text>
        <dbReference type="Rhea" id="RHEA:60292"/>
        <dbReference type="Rhea" id="RHEA-COMP:15535"/>
        <dbReference type="Rhea" id="RHEA-COMP:15548"/>
        <dbReference type="ChEBI" id="CHEBI:15378"/>
        <dbReference type="ChEBI" id="CHEBI:29969"/>
        <dbReference type="ChEBI" id="CHEBI:57856"/>
        <dbReference type="ChEBI" id="CHEBI:59789"/>
        <dbReference type="ChEBI" id="CHEBI:61961"/>
        <dbReference type="EC" id="2.1.1.356"/>
    </reaction>
</comment>
<comment type="subcellular location">
    <subcellularLocation>
        <location evidence="7">Nucleus</location>
    </subcellularLocation>
</comment>
<comment type="tissue specificity">
    <text evidence="6">Widely expressed.</text>
</comment>
<comment type="similarity">
    <text evidence="3">Belongs to the class V-like SAM-binding methyltransferase superfamily. Histone-lysine methyltransferase family. EZ subfamily.</text>
</comment>
<reference key="1">
    <citation type="journal article" date="2002" name="Plant Physiol.">
        <title>Sequence relationships, conserved domains, and expression patterns for maize homologs of the Polycomb group genes E(z), esc, and E(Pc).</title>
        <authorList>
            <person name="Springer N.M."/>
            <person name="Danilevskaya O.N."/>
            <person name="Hermon P."/>
            <person name="Helentjaris T.G."/>
            <person name="Phillips R.L."/>
            <person name="Kaeppler H.F."/>
            <person name="Kaeppler S.M."/>
        </authorList>
    </citation>
    <scope>NUCLEOTIDE SEQUENCE [MRNA]</scope>
    <scope>TISSUE SPECIFICITY</scope>
    <source>
        <tissue>Seed</tissue>
    </source>
</reference>
<organism>
    <name type="scientific">Zea mays</name>
    <name type="common">Maize</name>
    <dbReference type="NCBI Taxonomy" id="4577"/>
    <lineage>
        <taxon>Eukaryota</taxon>
        <taxon>Viridiplantae</taxon>
        <taxon>Streptophyta</taxon>
        <taxon>Embryophyta</taxon>
        <taxon>Tracheophyta</taxon>
        <taxon>Spermatophyta</taxon>
        <taxon>Magnoliopsida</taxon>
        <taxon>Liliopsida</taxon>
        <taxon>Poales</taxon>
        <taxon>Poaceae</taxon>
        <taxon>PACMAD clade</taxon>
        <taxon>Panicoideae</taxon>
        <taxon>Andropogonodae</taxon>
        <taxon>Andropogoneae</taxon>
        <taxon>Tripsacinae</taxon>
        <taxon>Zea</taxon>
    </lineage>
</organism>
<feature type="chain" id="PRO_0000213998" description="Histone-lysine N-methyltransferase EZ1">
    <location>
        <begin position="1"/>
        <end position="931"/>
    </location>
</feature>
<feature type="domain" description="SANT">
    <location>
        <begin position="565"/>
        <end position="615"/>
    </location>
</feature>
<feature type="domain" description="CXC" evidence="4">
    <location>
        <begin position="664"/>
        <end position="763"/>
    </location>
</feature>
<feature type="domain" description="SET" evidence="2">
    <location>
        <begin position="778"/>
        <end position="893"/>
    </location>
</feature>
<feature type="region of interest" description="Disordered" evidence="5">
    <location>
        <begin position="1"/>
        <end position="37"/>
    </location>
</feature>
<feature type="region of interest" description="Disordered" evidence="5">
    <location>
        <begin position="372"/>
        <end position="450"/>
    </location>
</feature>
<feature type="region of interest" description="Disordered" evidence="5">
    <location>
        <begin position="491"/>
        <end position="549"/>
    </location>
</feature>
<feature type="region of interest" description="Disordered" evidence="5">
    <location>
        <begin position="903"/>
        <end position="931"/>
    </location>
</feature>
<feature type="compositionally biased region" description="Low complexity" evidence="5">
    <location>
        <begin position="1"/>
        <end position="30"/>
    </location>
</feature>
<feature type="compositionally biased region" description="Polar residues" evidence="5">
    <location>
        <begin position="375"/>
        <end position="385"/>
    </location>
</feature>
<feature type="compositionally biased region" description="Basic residues" evidence="5">
    <location>
        <begin position="386"/>
        <end position="398"/>
    </location>
</feature>
<feature type="compositionally biased region" description="Polar residues" evidence="5">
    <location>
        <begin position="423"/>
        <end position="433"/>
    </location>
</feature>
<feature type="compositionally biased region" description="Low complexity" evidence="5">
    <location>
        <begin position="500"/>
        <end position="509"/>
    </location>
</feature>
<feature type="compositionally biased region" description="Basic and acidic residues" evidence="5">
    <location>
        <begin position="528"/>
        <end position="549"/>
    </location>
</feature>
<feature type="compositionally biased region" description="Basic and acidic residues" evidence="5">
    <location>
        <begin position="903"/>
        <end position="915"/>
    </location>
</feature>
<evidence type="ECO:0000250" key="1"/>
<evidence type="ECO:0000255" key="2">
    <source>
        <dbReference type="PROSITE-ProRule" id="PRU00190"/>
    </source>
</evidence>
<evidence type="ECO:0000255" key="3">
    <source>
        <dbReference type="PROSITE-ProRule" id="PRU00909"/>
    </source>
</evidence>
<evidence type="ECO:0000255" key="4">
    <source>
        <dbReference type="PROSITE-ProRule" id="PRU00970"/>
    </source>
</evidence>
<evidence type="ECO:0000256" key="5">
    <source>
        <dbReference type="SAM" id="MobiDB-lite"/>
    </source>
</evidence>
<evidence type="ECO:0000269" key="6">
    <source>
    </source>
</evidence>
<evidence type="ECO:0000305" key="7"/>
<gene>
    <name type="primary">EZ1</name>
    <name type="synonym">MEZ1</name>
</gene>